<proteinExistence type="inferred from homology"/>
<keyword id="KW-0963">Cytoplasm</keyword>
<keyword id="KW-0456">Lyase</keyword>
<keyword id="KW-1185">Reference proteome</keyword>
<keyword id="KW-0704">Schiff base</keyword>
<evidence type="ECO:0000255" key="1">
    <source>
        <dbReference type="HAMAP-Rule" id="MF_00592"/>
    </source>
</evidence>
<protein>
    <recommendedName>
        <fullName evidence="1">Deoxyribose-phosphate aldolase</fullName>
        <shortName evidence="1">DERA</shortName>
        <ecNumber evidence="1">4.1.2.4</ecNumber>
    </recommendedName>
    <alternativeName>
        <fullName evidence="1">2-deoxy-D-ribose 5-phosphate aldolase</fullName>
    </alternativeName>
    <alternativeName>
        <fullName evidence="1">Phosphodeoxyriboaldolase</fullName>
        <shortName evidence="1">Deoxyriboaldolase</shortName>
    </alternativeName>
</protein>
<reference key="1">
    <citation type="submission" date="2006-12" db="EMBL/GenBank/DDBJ databases">
        <title>Complete sequence of Shewanella amazonensis SB2B.</title>
        <authorList>
            <consortium name="US DOE Joint Genome Institute"/>
            <person name="Copeland A."/>
            <person name="Lucas S."/>
            <person name="Lapidus A."/>
            <person name="Barry K."/>
            <person name="Detter J.C."/>
            <person name="Glavina del Rio T."/>
            <person name="Hammon N."/>
            <person name="Israni S."/>
            <person name="Dalin E."/>
            <person name="Tice H."/>
            <person name="Pitluck S."/>
            <person name="Munk A.C."/>
            <person name="Brettin T."/>
            <person name="Bruce D."/>
            <person name="Han C."/>
            <person name="Tapia R."/>
            <person name="Gilna P."/>
            <person name="Schmutz J."/>
            <person name="Larimer F."/>
            <person name="Land M."/>
            <person name="Hauser L."/>
            <person name="Kyrpides N."/>
            <person name="Mikhailova N."/>
            <person name="Fredrickson J."/>
            <person name="Richardson P."/>
        </authorList>
    </citation>
    <scope>NUCLEOTIDE SEQUENCE [LARGE SCALE GENOMIC DNA]</scope>
    <source>
        <strain>ATCC BAA-1098 / SB2B</strain>
    </source>
</reference>
<sequence>MSDLKKAAQRAIELMDLTTLNDDDTAEKVIELCKKAVTPAGHTAAICIYPRFIPIARKTLIELDAEDIQIATVTNFPHGNDDIAIAVLETRAAVAYGADEVDVVFPYRALMEGDETVGFELVKACKEACGDDVLLKVIIESGELKDPALIRKASEISIDAGADFIKTSTGKVPVNATLEAAEIMLTVIAEKNRAVGFKPAGGVRDAAAAAEFLGTAARILGEDWVTPRTFRFGASSLLSSLLHTLELADAPKGAQGY</sequence>
<gene>
    <name evidence="1" type="primary">deoC</name>
    <name type="ordered locus">Sama_0973</name>
</gene>
<organism>
    <name type="scientific">Shewanella amazonensis (strain ATCC BAA-1098 / SB2B)</name>
    <dbReference type="NCBI Taxonomy" id="326297"/>
    <lineage>
        <taxon>Bacteria</taxon>
        <taxon>Pseudomonadati</taxon>
        <taxon>Pseudomonadota</taxon>
        <taxon>Gammaproteobacteria</taxon>
        <taxon>Alteromonadales</taxon>
        <taxon>Shewanellaceae</taxon>
        <taxon>Shewanella</taxon>
    </lineage>
</organism>
<accession>A1S474</accession>
<dbReference type="EC" id="4.1.2.4" evidence="1"/>
<dbReference type="EMBL" id="CP000507">
    <property type="protein sequence ID" value="ABL99180.1"/>
    <property type="molecule type" value="Genomic_DNA"/>
</dbReference>
<dbReference type="RefSeq" id="WP_011759089.1">
    <property type="nucleotide sequence ID" value="NC_008700.1"/>
</dbReference>
<dbReference type="SMR" id="A1S474"/>
<dbReference type="STRING" id="326297.Sama_0973"/>
<dbReference type="KEGG" id="saz:Sama_0973"/>
<dbReference type="eggNOG" id="COG0274">
    <property type="taxonomic scope" value="Bacteria"/>
</dbReference>
<dbReference type="HOGENOM" id="CLU_053595_3_1_6"/>
<dbReference type="OrthoDB" id="6579831at2"/>
<dbReference type="UniPathway" id="UPA00002">
    <property type="reaction ID" value="UER00468"/>
</dbReference>
<dbReference type="Proteomes" id="UP000009175">
    <property type="component" value="Chromosome"/>
</dbReference>
<dbReference type="GO" id="GO:0005737">
    <property type="term" value="C:cytoplasm"/>
    <property type="evidence" value="ECO:0007669"/>
    <property type="project" value="UniProtKB-SubCell"/>
</dbReference>
<dbReference type="GO" id="GO:0004139">
    <property type="term" value="F:deoxyribose-phosphate aldolase activity"/>
    <property type="evidence" value="ECO:0007669"/>
    <property type="project" value="UniProtKB-UniRule"/>
</dbReference>
<dbReference type="GO" id="GO:0006018">
    <property type="term" value="P:2-deoxyribose 1-phosphate catabolic process"/>
    <property type="evidence" value="ECO:0007669"/>
    <property type="project" value="UniProtKB-UniRule"/>
</dbReference>
<dbReference type="GO" id="GO:0016052">
    <property type="term" value="P:carbohydrate catabolic process"/>
    <property type="evidence" value="ECO:0007669"/>
    <property type="project" value="TreeGrafter"/>
</dbReference>
<dbReference type="GO" id="GO:0009264">
    <property type="term" value="P:deoxyribonucleotide catabolic process"/>
    <property type="evidence" value="ECO:0007669"/>
    <property type="project" value="InterPro"/>
</dbReference>
<dbReference type="CDD" id="cd00959">
    <property type="entry name" value="DeoC"/>
    <property type="match status" value="1"/>
</dbReference>
<dbReference type="Gene3D" id="3.20.20.70">
    <property type="entry name" value="Aldolase class I"/>
    <property type="match status" value="1"/>
</dbReference>
<dbReference type="HAMAP" id="MF_00592">
    <property type="entry name" value="DeoC_type2"/>
    <property type="match status" value="1"/>
</dbReference>
<dbReference type="InterPro" id="IPR013785">
    <property type="entry name" value="Aldolase_TIM"/>
</dbReference>
<dbReference type="InterPro" id="IPR011343">
    <property type="entry name" value="DeoC"/>
</dbReference>
<dbReference type="InterPro" id="IPR002915">
    <property type="entry name" value="DeoC/FbaB/LacD_aldolase"/>
</dbReference>
<dbReference type="InterPro" id="IPR023649">
    <property type="entry name" value="DeoC_typeII"/>
</dbReference>
<dbReference type="NCBIfam" id="TIGR00126">
    <property type="entry name" value="deoC"/>
    <property type="match status" value="1"/>
</dbReference>
<dbReference type="PANTHER" id="PTHR10889">
    <property type="entry name" value="DEOXYRIBOSE-PHOSPHATE ALDOLASE"/>
    <property type="match status" value="1"/>
</dbReference>
<dbReference type="PANTHER" id="PTHR10889:SF3">
    <property type="entry name" value="DEOXYRIBOSE-PHOSPHATE ALDOLASE"/>
    <property type="match status" value="1"/>
</dbReference>
<dbReference type="Pfam" id="PF01791">
    <property type="entry name" value="DeoC"/>
    <property type="match status" value="1"/>
</dbReference>
<dbReference type="PIRSF" id="PIRSF001357">
    <property type="entry name" value="DeoC"/>
    <property type="match status" value="1"/>
</dbReference>
<dbReference type="SMART" id="SM01133">
    <property type="entry name" value="DeoC"/>
    <property type="match status" value="1"/>
</dbReference>
<dbReference type="SUPFAM" id="SSF51569">
    <property type="entry name" value="Aldolase"/>
    <property type="match status" value="1"/>
</dbReference>
<name>DEOC_SHEAM</name>
<comment type="function">
    <text evidence="1">Catalyzes a reversible aldol reaction between acetaldehyde and D-glyceraldehyde 3-phosphate to generate 2-deoxy-D-ribose 5-phosphate.</text>
</comment>
<comment type="catalytic activity">
    <reaction evidence="1">
        <text>2-deoxy-D-ribose 5-phosphate = D-glyceraldehyde 3-phosphate + acetaldehyde</text>
        <dbReference type="Rhea" id="RHEA:12821"/>
        <dbReference type="ChEBI" id="CHEBI:15343"/>
        <dbReference type="ChEBI" id="CHEBI:59776"/>
        <dbReference type="ChEBI" id="CHEBI:62877"/>
        <dbReference type="EC" id="4.1.2.4"/>
    </reaction>
</comment>
<comment type="pathway">
    <text evidence="1">Carbohydrate degradation; 2-deoxy-D-ribose 1-phosphate degradation; D-glyceraldehyde 3-phosphate and acetaldehyde from 2-deoxy-alpha-D-ribose 1-phosphate: step 2/2.</text>
</comment>
<comment type="subcellular location">
    <subcellularLocation>
        <location evidence="1">Cytoplasm</location>
    </subcellularLocation>
</comment>
<comment type="similarity">
    <text evidence="1">Belongs to the DeoC/FbaB aldolase family. DeoC type 2 subfamily.</text>
</comment>
<feature type="chain" id="PRO_1000072602" description="Deoxyribose-phosphate aldolase">
    <location>
        <begin position="1"/>
        <end position="257"/>
    </location>
</feature>
<feature type="active site" description="Proton donor/acceptor" evidence="1">
    <location>
        <position position="102"/>
    </location>
</feature>
<feature type="active site" description="Schiff-base intermediate with acetaldehyde" evidence="1">
    <location>
        <position position="166"/>
    </location>
</feature>
<feature type="active site" description="Proton donor/acceptor" evidence="1">
    <location>
        <position position="198"/>
    </location>
</feature>